<accession>P66318</accession>
<accession>Q99XF6</accession>
<comment type="function">
    <text evidence="1">Binds to the 23S rRNA.</text>
</comment>
<comment type="similarity">
    <text evidence="1">Belongs to the bacterial ribosomal protein bL9 family.</text>
</comment>
<sequence>MKVIFTQDVKGKGKKGEVKEVPVGYANNFLLKKNYAVEATPGNLKQLELQKKRAKQERQQEIEDAKALKETLSNIEVEVSAKTGEGGKLFGSVSTKQIAEALKAQHDIKIDKRKMDLPNGIHSLGYTNVPVKLDKEVEGTIRVHTVEQ</sequence>
<proteinExistence type="evidence at protein level"/>
<organism>
    <name type="scientific">Staphylococcus aureus (strain N315)</name>
    <dbReference type="NCBI Taxonomy" id="158879"/>
    <lineage>
        <taxon>Bacteria</taxon>
        <taxon>Bacillati</taxon>
        <taxon>Bacillota</taxon>
        <taxon>Bacilli</taxon>
        <taxon>Bacillales</taxon>
        <taxon>Staphylococcaceae</taxon>
        <taxon>Staphylococcus</taxon>
    </lineage>
</organism>
<feature type="chain" id="PRO_0000176677" description="Large ribosomal subunit protein bL9">
    <location>
        <begin position="1"/>
        <end position="148"/>
    </location>
</feature>
<gene>
    <name evidence="1" type="primary">rplI</name>
    <name type="ordered locus">SA0014</name>
</gene>
<name>RL9_STAAN</name>
<dbReference type="EMBL" id="BA000018">
    <property type="protein sequence ID" value="BAB41231.1"/>
    <property type="molecule type" value="Genomic_DNA"/>
</dbReference>
<dbReference type="PIR" id="G89759">
    <property type="entry name" value="G89759"/>
</dbReference>
<dbReference type="RefSeq" id="WP_000864305.1">
    <property type="nucleotide sequence ID" value="NC_002745.2"/>
</dbReference>
<dbReference type="SMR" id="P66318"/>
<dbReference type="EnsemblBacteria" id="BAB41231">
    <property type="protein sequence ID" value="BAB41231"/>
    <property type="gene ID" value="BAB41231"/>
</dbReference>
<dbReference type="KEGG" id="sau:SA0014"/>
<dbReference type="HOGENOM" id="CLU_078938_3_2_9"/>
<dbReference type="GO" id="GO:1990904">
    <property type="term" value="C:ribonucleoprotein complex"/>
    <property type="evidence" value="ECO:0007669"/>
    <property type="project" value="UniProtKB-KW"/>
</dbReference>
<dbReference type="GO" id="GO:0005840">
    <property type="term" value="C:ribosome"/>
    <property type="evidence" value="ECO:0007669"/>
    <property type="project" value="UniProtKB-KW"/>
</dbReference>
<dbReference type="GO" id="GO:0019843">
    <property type="term" value="F:rRNA binding"/>
    <property type="evidence" value="ECO:0007669"/>
    <property type="project" value="UniProtKB-UniRule"/>
</dbReference>
<dbReference type="GO" id="GO:0003735">
    <property type="term" value="F:structural constituent of ribosome"/>
    <property type="evidence" value="ECO:0007669"/>
    <property type="project" value="InterPro"/>
</dbReference>
<dbReference type="GO" id="GO:0006412">
    <property type="term" value="P:translation"/>
    <property type="evidence" value="ECO:0007669"/>
    <property type="project" value="UniProtKB-UniRule"/>
</dbReference>
<dbReference type="FunFam" id="3.10.430.100:FF:000002">
    <property type="entry name" value="50S ribosomal protein L9"/>
    <property type="match status" value="1"/>
</dbReference>
<dbReference type="FunFam" id="3.40.5.10:FF:000002">
    <property type="entry name" value="50S ribosomal protein L9"/>
    <property type="match status" value="1"/>
</dbReference>
<dbReference type="Gene3D" id="3.10.430.100">
    <property type="entry name" value="Ribosomal protein L9, C-terminal domain"/>
    <property type="match status" value="1"/>
</dbReference>
<dbReference type="Gene3D" id="3.40.5.10">
    <property type="entry name" value="Ribosomal protein L9, N-terminal domain"/>
    <property type="match status" value="1"/>
</dbReference>
<dbReference type="HAMAP" id="MF_00503">
    <property type="entry name" value="Ribosomal_bL9"/>
    <property type="match status" value="1"/>
</dbReference>
<dbReference type="InterPro" id="IPR000244">
    <property type="entry name" value="Ribosomal_bL9"/>
</dbReference>
<dbReference type="InterPro" id="IPR009027">
    <property type="entry name" value="Ribosomal_bL9/RNase_H1_N"/>
</dbReference>
<dbReference type="InterPro" id="IPR020594">
    <property type="entry name" value="Ribosomal_bL9_bac/chp"/>
</dbReference>
<dbReference type="InterPro" id="IPR020069">
    <property type="entry name" value="Ribosomal_bL9_C"/>
</dbReference>
<dbReference type="InterPro" id="IPR036791">
    <property type="entry name" value="Ribosomal_bL9_C_sf"/>
</dbReference>
<dbReference type="InterPro" id="IPR020070">
    <property type="entry name" value="Ribosomal_bL9_N"/>
</dbReference>
<dbReference type="InterPro" id="IPR036935">
    <property type="entry name" value="Ribosomal_bL9_N_sf"/>
</dbReference>
<dbReference type="NCBIfam" id="TIGR00158">
    <property type="entry name" value="L9"/>
    <property type="match status" value="1"/>
</dbReference>
<dbReference type="PANTHER" id="PTHR21368">
    <property type="entry name" value="50S RIBOSOMAL PROTEIN L9"/>
    <property type="match status" value="1"/>
</dbReference>
<dbReference type="Pfam" id="PF03948">
    <property type="entry name" value="Ribosomal_L9_C"/>
    <property type="match status" value="1"/>
</dbReference>
<dbReference type="Pfam" id="PF01281">
    <property type="entry name" value="Ribosomal_L9_N"/>
    <property type="match status" value="1"/>
</dbReference>
<dbReference type="SUPFAM" id="SSF55658">
    <property type="entry name" value="L9 N-domain-like"/>
    <property type="match status" value="1"/>
</dbReference>
<dbReference type="SUPFAM" id="SSF55653">
    <property type="entry name" value="Ribosomal protein L9 C-domain"/>
    <property type="match status" value="1"/>
</dbReference>
<dbReference type="PROSITE" id="PS00651">
    <property type="entry name" value="RIBOSOMAL_L9"/>
    <property type="match status" value="1"/>
</dbReference>
<reference key="1">
    <citation type="journal article" date="2001" name="Lancet">
        <title>Whole genome sequencing of meticillin-resistant Staphylococcus aureus.</title>
        <authorList>
            <person name="Kuroda M."/>
            <person name="Ohta T."/>
            <person name="Uchiyama I."/>
            <person name="Baba T."/>
            <person name="Yuzawa H."/>
            <person name="Kobayashi I."/>
            <person name="Cui L."/>
            <person name="Oguchi A."/>
            <person name="Aoki K."/>
            <person name="Nagai Y."/>
            <person name="Lian J.-Q."/>
            <person name="Ito T."/>
            <person name="Kanamori M."/>
            <person name="Matsumaru H."/>
            <person name="Maruyama A."/>
            <person name="Murakami H."/>
            <person name="Hosoyama A."/>
            <person name="Mizutani-Ui Y."/>
            <person name="Takahashi N.K."/>
            <person name="Sawano T."/>
            <person name="Inoue R."/>
            <person name="Kaito C."/>
            <person name="Sekimizu K."/>
            <person name="Hirakawa H."/>
            <person name="Kuhara S."/>
            <person name="Goto S."/>
            <person name="Yabuzaki J."/>
            <person name="Kanehisa M."/>
            <person name="Yamashita A."/>
            <person name="Oshima K."/>
            <person name="Furuya K."/>
            <person name="Yoshino C."/>
            <person name="Shiba T."/>
            <person name="Hattori M."/>
            <person name="Ogasawara N."/>
            <person name="Hayashi H."/>
            <person name="Hiramatsu K."/>
        </authorList>
    </citation>
    <scope>NUCLEOTIDE SEQUENCE [LARGE SCALE GENOMIC DNA]</scope>
    <source>
        <strain>N315</strain>
    </source>
</reference>
<reference key="2">
    <citation type="submission" date="2007-10" db="UniProtKB">
        <title>Shotgun proteomic analysis of total and membrane protein extracts of S. aureus strain N315.</title>
        <authorList>
            <person name="Vaezzadeh A.R."/>
            <person name="Deshusses J."/>
            <person name="Lescuyer P."/>
            <person name="Hochstrasser D.F."/>
        </authorList>
    </citation>
    <scope>IDENTIFICATION BY MASS SPECTROMETRY [LARGE SCALE ANALYSIS]</scope>
    <source>
        <strain>N315</strain>
    </source>
</reference>
<keyword id="KW-0687">Ribonucleoprotein</keyword>
<keyword id="KW-0689">Ribosomal protein</keyword>
<keyword id="KW-0694">RNA-binding</keyword>
<keyword id="KW-0699">rRNA-binding</keyword>
<evidence type="ECO:0000255" key="1">
    <source>
        <dbReference type="HAMAP-Rule" id="MF_00503"/>
    </source>
</evidence>
<evidence type="ECO:0000305" key="2"/>
<protein>
    <recommendedName>
        <fullName evidence="1">Large ribosomal subunit protein bL9</fullName>
    </recommendedName>
    <alternativeName>
        <fullName evidence="2">50S ribosomal protein L9</fullName>
    </alternativeName>
</protein>